<proteinExistence type="evidence at protein level"/>
<sequence length="788" mass="90485">MMDNEVLDFDIGVGVSSGGDVDDDAIDIEHHALDDDDMLDSPIMPCGNGLVGNSGNYFPNQEEEACDLLDLEPYDGLEFESEEAAKAFYNSYARRIGFSTRVSSSRRSRRDGAIIQRQFVCAKEGFRNMNEKRTKDREIKRPRTITRVGCKASLSVKMQDSGKWLVSGFVKDHNHELVPPDQVHCLRSHRQISGPAKTLIDTLQAAGMGPRRIMSALIKEYGGISKVGFTEVDCRNYMRNNRQKSIEGEIQLLLDYLRQMNADNPNFFYSVQGSEDQSVGNVFWADPKAIMDFTHFGDTVTFDTTYRSNRYRLPFAPFTGVNHHGQPILFGCAFIINETEASFVWLFNTWLAAMSAHPPVSITTDHDAVIRAAIMHVFPGARHRFCKWHILKKCQEKLSHVFLKHPSFESDFHKCVNLTESVEDFERCWFSLLDKYELRDHEWLQAIYSDRRQWVPVYLRDTFFADMSLTHRSDSINSYFDGYINASTNLSQFFKLYEKALESRLEKEVKADYDTMNSPPVLKTPSPMEKQASELYTRKLFMRFQEELVGTLTFMASKADDDGDLVTYQVAKYGEAHKAHFVKFNVLEMRANCSCQMFEFSGIICRHILAVFRVTNLLTLPPYYILKRWTRNAKSSVIFDDYNLHAYANYLESHTVRYNTLRHKASNFVQEAGKSLYTCDVAVVALQEAAKTVSLAMNKEVRRTMANRHFKASSVTGGKHQQEVLAQPEPEDEMDKKINQLRNELELANRKCEAYRTNLLSVLKEMEDQKLQVSIKVQNIKISLKDNL</sequence>
<organism>
    <name type="scientific">Arabidopsis thaliana</name>
    <name type="common">Mouse-ear cress</name>
    <dbReference type="NCBI Taxonomy" id="3702"/>
    <lineage>
        <taxon>Eukaryota</taxon>
        <taxon>Viridiplantae</taxon>
        <taxon>Streptophyta</taxon>
        <taxon>Embryophyta</taxon>
        <taxon>Tracheophyta</taxon>
        <taxon>Spermatophyta</taxon>
        <taxon>Magnoliopsida</taxon>
        <taxon>eudicotyledons</taxon>
        <taxon>Gunneridae</taxon>
        <taxon>Pentapetalae</taxon>
        <taxon>rosids</taxon>
        <taxon>malvids</taxon>
        <taxon>Brassicales</taxon>
        <taxon>Brassicaceae</taxon>
        <taxon>Camelineae</taxon>
        <taxon>Arabidopsis</taxon>
    </lineage>
</organism>
<evidence type="ECO:0000255" key="1"/>
<evidence type="ECO:0000255" key="2">
    <source>
        <dbReference type="PROSITE-ProRule" id="PRU00325"/>
    </source>
</evidence>
<evidence type="ECO:0000256" key="3">
    <source>
        <dbReference type="SAM" id="MobiDB-lite"/>
    </source>
</evidence>
<evidence type="ECO:0000269" key="4">
    <source>
    </source>
</evidence>
<evidence type="ECO:0000305" key="5"/>
<comment type="function">
    <text>Putative transcription activator involved in regulating light control of development.</text>
</comment>
<comment type="interaction">
    <interactant intactId="EBI-15194231">
        <id>Q9SZL8</id>
    </interactant>
    <interactant intactId="EBI-15191981">
        <id>Q9LV59</id>
        <label>At3g24490</label>
    </interactant>
    <organismsDiffer>false</organismsDiffer>
    <experiments>3</experiments>
</comment>
<comment type="interaction">
    <interactant intactId="EBI-15194231">
        <id>Q9SZL8</id>
    </interactant>
    <interactant intactId="EBI-15192535">
        <id>F4JI72</id>
        <label>At4g03250</label>
    </interactant>
    <organismsDiffer>false</organismsDiffer>
    <experiments>3</experiments>
</comment>
<comment type="interaction">
    <interactant intactId="EBI-15194231">
        <id>Q9SZL8</id>
    </interactant>
    <interactant intactId="EBI-4432826">
        <id>Q93Z68</id>
        <label>FRF1</label>
    </interactant>
    <organismsDiffer>false</organismsDiffer>
    <experiments>4</experiments>
</comment>
<comment type="interaction">
    <interactant intactId="EBI-15194231">
        <id>Q9SZL8</id>
    </interactant>
    <interactant intactId="EBI-4448729">
        <id>Q9ZVC9</id>
        <label>FRS3</label>
    </interactant>
    <organismsDiffer>false</organismsDiffer>
    <experiments>5</experiments>
</comment>
<comment type="subcellular location">
    <subcellularLocation>
        <location evidence="4">Nucleus</location>
    </subcellularLocation>
    <text>The nuclear localization is independent of the light treatment.</text>
</comment>
<comment type="tissue specificity">
    <text evidence="4">Expressed in hypocotyls, rosette and cauline leaves, inflorescences stems, flowers and siliques.</text>
</comment>
<comment type="induction">
    <text evidence="4">Up-regulated in hypocotyls by far-red light treatment.</text>
</comment>
<comment type="similarity">
    <text evidence="5">Belongs to the FHY3/FAR1 family.</text>
</comment>
<feature type="chain" id="PRO_0000363483" description="Protein FAR1-RELATED SEQUENCE 5">
    <location>
        <begin position="1"/>
        <end position="788"/>
    </location>
</feature>
<feature type="domain" description="FAR1">
    <location>
        <begin position="87"/>
        <end position="179"/>
    </location>
</feature>
<feature type="domain" description="MULE">
    <location>
        <begin position="299"/>
        <end position="395"/>
    </location>
</feature>
<feature type="zinc finger region" description="SWIM-type" evidence="2">
    <location>
        <begin position="584"/>
        <end position="616"/>
    </location>
</feature>
<feature type="region of interest" description="Disordered" evidence="3">
    <location>
        <begin position="713"/>
        <end position="733"/>
    </location>
</feature>
<feature type="coiled-coil region" evidence="1">
    <location>
        <begin position="731"/>
        <end position="768"/>
    </location>
</feature>
<accession>Q9SZL8</accession>
<gene>
    <name type="primary">FRS5</name>
    <name type="ordered locus">At4g38180</name>
    <name type="ORF">F20D10.300</name>
</gene>
<dbReference type="EMBL" id="AL035538">
    <property type="protein sequence ID" value="CAB37558.1"/>
    <property type="molecule type" value="Genomic_DNA"/>
</dbReference>
<dbReference type="EMBL" id="AL161593">
    <property type="protein sequence ID" value="CAB80483.1"/>
    <property type="molecule type" value="Genomic_DNA"/>
</dbReference>
<dbReference type="EMBL" id="CP002687">
    <property type="protein sequence ID" value="AEE86890.1"/>
    <property type="molecule type" value="Genomic_DNA"/>
</dbReference>
<dbReference type="EMBL" id="AY136457">
    <property type="protein sequence ID" value="AAM97122.1"/>
    <property type="molecule type" value="mRNA"/>
</dbReference>
<dbReference type="PIR" id="T05645">
    <property type="entry name" value="T05645"/>
</dbReference>
<dbReference type="RefSeq" id="NP_195531.1">
    <property type="nucleotide sequence ID" value="NM_119979.3"/>
</dbReference>
<dbReference type="BioGRID" id="15254">
    <property type="interactions" value="18"/>
</dbReference>
<dbReference type="FunCoup" id="Q9SZL8">
    <property type="interactions" value="100"/>
</dbReference>
<dbReference type="IntAct" id="Q9SZL8">
    <property type="interactions" value="19"/>
</dbReference>
<dbReference type="STRING" id="3702.Q9SZL8"/>
<dbReference type="iPTMnet" id="Q9SZL8"/>
<dbReference type="PaxDb" id="3702-AT4G38180.1"/>
<dbReference type="ProteomicsDB" id="230000"/>
<dbReference type="EnsemblPlants" id="AT4G38180.1">
    <property type="protein sequence ID" value="AT4G38180.1"/>
    <property type="gene ID" value="AT4G38180"/>
</dbReference>
<dbReference type="GeneID" id="829974"/>
<dbReference type="Gramene" id="AT4G38180.1">
    <property type="protein sequence ID" value="AT4G38180.1"/>
    <property type="gene ID" value="AT4G38180"/>
</dbReference>
<dbReference type="KEGG" id="ath:AT4G38180"/>
<dbReference type="Araport" id="AT4G38180"/>
<dbReference type="TAIR" id="AT4G38180">
    <property type="gene designation" value="FRS5"/>
</dbReference>
<dbReference type="eggNOG" id="ENOG502QR4C">
    <property type="taxonomic scope" value="Eukaryota"/>
</dbReference>
<dbReference type="HOGENOM" id="CLU_008459_7_3_1"/>
<dbReference type="InParanoid" id="Q9SZL8"/>
<dbReference type="OMA" id="FESCWST"/>
<dbReference type="PhylomeDB" id="Q9SZL8"/>
<dbReference type="PRO" id="PR:Q9SZL8"/>
<dbReference type="Proteomes" id="UP000006548">
    <property type="component" value="Chromosome 4"/>
</dbReference>
<dbReference type="ExpressionAtlas" id="Q9SZL8">
    <property type="expression patterns" value="baseline and differential"/>
</dbReference>
<dbReference type="GO" id="GO:0005634">
    <property type="term" value="C:nucleus"/>
    <property type="evidence" value="ECO:0007669"/>
    <property type="project" value="UniProtKB-SubCell"/>
</dbReference>
<dbReference type="GO" id="GO:0008270">
    <property type="term" value="F:zinc ion binding"/>
    <property type="evidence" value="ECO:0007669"/>
    <property type="project" value="UniProtKB-KW"/>
</dbReference>
<dbReference type="GO" id="GO:0006355">
    <property type="term" value="P:regulation of DNA-templated transcription"/>
    <property type="evidence" value="ECO:0007669"/>
    <property type="project" value="InterPro"/>
</dbReference>
<dbReference type="InterPro" id="IPR004330">
    <property type="entry name" value="FAR1_DNA_bnd_dom"/>
</dbReference>
<dbReference type="InterPro" id="IPR031052">
    <property type="entry name" value="FHY3/FAR1"/>
</dbReference>
<dbReference type="InterPro" id="IPR018289">
    <property type="entry name" value="MULE_transposase_dom"/>
</dbReference>
<dbReference type="InterPro" id="IPR006564">
    <property type="entry name" value="Znf_PMZ"/>
</dbReference>
<dbReference type="InterPro" id="IPR007527">
    <property type="entry name" value="Znf_SWIM"/>
</dbReference>
<dbReference type="PANTHER" id="PTHR31669">
    <property type="entry name" value="PROTEIN FAR1-RELATED SEQUENCE 10-RELATED"/>
    <property type="match status" value="1"/>
</dbReference>
<dbReference type="PANTHER" id="PTHR31669:SF179">
    <property type="entry name" value="PROTEIN FAR1-RELATED SEQUENCE 5"/>
    <property type="match status" value="1"/>
</dbReference>
<dbReference type="Pfam" id="PF03101">
    <property type="entry name" value="FAR1"/>
    <property type="match status" value="1"/>
</dbReference>
<dbReference type="Pfam" id="PF10551">
    <property type="entry name" value="MULE"/>
    <property type="match status" value="1"/>
</dbReference>
<dbReference type="Pfam" id="PF04434">
    <property type="entry name" value="SWIM"/>
    <property type="match status" value="1"/>
</dbReference>
<dbReference type="SMART" id="SM00575">
    <property type="entry name" value="ZnF_PMZ"/>
    <property type="match status" value="1"/>
</dbReference>
<dbReference type="PROSITE" id="PS50966">
    <property type="entry name" value="ZF_SWIM"/>
    <property type="match status" value="1"/>
</dbReference>
<reference key="1">
    <citation type="journal article" date="1999" name="Nature">
        <title>Sequence and analysis of chromosome 4 of the plant Arabidopsis thaliana.</title>
        <authorList>
            <person name="Mayer K.F.X."/>
            <person name="Schueller C."/>
            <person name="Wambutt R."/>
            <person name="Murphy G."/>
            <person name="Volckaert G."/>
            <person name="Pohl T."/>
            <person name="Duesterhoeft A."/>
            <person name="Stiekema W."/>
            <person name="Entian K.-D."/>
            <person name="Terryn N."/>
            <person name="Harris B."/>
            <person name="Ansorge W."/>
            <person name="Brandt P."/>
            <person name="Grivell L.A."/>
            <person name="Rieger M."/>
            <person name="Weichselgartner M."/>
            <person name="de Simone V."/>
            <person name="Obermaier B."/>
            <person name="Mache R."/>
            <person name="Mueller M."/>
            <person name="Kreis M."/>
            <person name="Delseny M."/>
            <person name="Puigdomenech P."/>
            <person name="Watson M."/>
            <person name="Schmidtheini T."/>
            <person name="Reichert B."/>
            <person name="Portetelle D."/>
            <person name="Perez-Alonso M."/>
            <person name="Boutry M."/>
            <person name="Bancroft I."/>
            <person name="Vos P."/>
            <person name="Hoheisel J."/>
            <person name="Zimmermann W."/>
            <person name="Wedler H."/>
            <person name="Ridley P."/>
            <person name="Langham S.-A."/>
            <person name="McCullagh B."/>
            <person name="Bilham L."/>
            <person name="Robben J."/>
            <person name="van der Schueren J."/>
            <person name="Grymonprez B."/>
            <person name="Chuang Y.-J."/>
            <person name="Vandenbussche F."/>
            <person name="Braeken M."/>
            <person name="Weltjens I."/>
            <person name="Voet M."/>
            <person name="Bastiaens I."/>
            <person name="Aert R."/>
            <person name="Defoor E."/>
            <person name="Weitzenegger T."/>
            <person name="Bothe G."/>
            <person name="Ramsperger U."/>
            <person name="Hilbert H."/>
            <person name="Braun M."/>
            <person name="Holzer E."/>
            <person name="Brandt A."/>
            <person name="Peters S."/>
            <person name="van Staveren M."/>
            <person name="Dirkse W."/>
            <person name="Mooijman P."/>
            <person name="Klein Lankhorst R."/>
            <person name="Rose M."/>
            <person name="Hauf J."/>
            <person name="Koetter P."/>
            <person name="Berneiser S."/>
            <person name="Hempel S."/>
            <person name="Feldpausch M."/>
            <person name="Lamberth S."/>
            <person name="Van den Daele H."/>
            <person name="De Keyser A."/>
            <person name="Buysshaert C."/>
            <person name="Gielen J."/>
            <person name="Villarroel R."/>
            <person name="De Clercq R."/>
            <person name="van Montagu M."/>
            <person name="Rogers J."/>
            <person name="Cronin A."/>
            <person name="Quail M.A."/>
            <person name="Bray-Allen S."/>
            <person name="Clark L."/>
            <person name="Doggett J."/>
            <person name="Hall S."/>
            <person name="Kay M."/>
            <person name="Lennard N."/>
            <person name="McLay K."/>
            <person name="Mayes R."/>
            <person name="Pettett A."/>
            <person name="Rajandream M.A."/>
            <person name="Lyne M."/>
            <person name="Benes V."/>
            <person name="Rechmann S."/>
            <person name="Borkova D."/>
            <person name="Bloecker H."/>
            <person name="Scharfe M."/>
            <person name="Grimm M."/>
            <person name="Loehnert T.-H."/>
            <person name="Dose S."/>
            <person name="de Haan M."/>
            <person name="Maarse A.C."/>
            <person name="Schaefer M."/>
            <person name="Mueller-Auer S."/>
            <person name="Gabel C."/>
            <person name="Fuchs M."/>
            <person name="Fartmann B."/>
            <person name="Granderath K."/>
            <person name="Dauner D."/>
            <person name="Herzl A."/>
            <person name="Neumann S."/>
            <person name="Argiriou A."/>
            <person name="Vitale D."/>
            <person name="Liguori R."/>
            <person name="Piravandi E."/>
            <person name="Massenet O."/>
            <person name="Quigley F."/>
            <person name="Clabauld G."/>
            <person name="Muendlein A."/>
            <person name="Felber R."/>
            <person name="Schnabl S."/>
            <person name="Hiller R."/>
            <person name="Schmidt W."/>
            <person name="Lecharny A."/>
            <person name="Aubourg S."/>
            <person name="Chefdor F."/>
            <person name="Cooke R."/>
            <person name="Berger C."/>
            <person name="Monfort A."/>
            <person name="Casacuberta E."/>
            <person name="Gibbons T."/>
            <person name="Weber N."/>
            <person name="Vandenbol M."/>
            <person name="Bargues M."/>
            <person name="Terol J."/>
            <person name="Torres A."/>
            <person name="Perez-Perez A."/>
            <person name="Purnelle B."/>
            <person name="Bent E."/>
            <person name="Johnson S."/>
            <person name="Tacon D."/>
            <person name="Jesse T."/>
            <person name="Heijnen L."/>
            <person name="Schwarz S."/>
            <person name="Scholler P."/>
            <person name="Heber S."/>
            <person name="Francs P."/>
            <person name="Bielke C."/>
            <person name="Frishman D."/>
            <person name="Haase D."/>
            <person name="Lemcke K."/>
            <person name="Mewes H.-W."/>
            <person name="Stocker S."/>
            <person name="Zaccaria P."/>
            <person name="Bevan M."/>
            <person name="Wilson R.K."/>
            <person name="de la Bastide M."/>
            <person name="Habermann K."/>
            <person name="Parnell L."/>
            <person name="Dedhia N."/>
            <person name="Gnoj L."/>
            <person name="Schutz K."/>
            <person name="Huang E."/>
            <person name="Spiegel L."/>
            <person name="Sekhon M."/>
            <person name="Murray J."/>
            <person name="Sheet P."/>
            <person name="Cordes M."/>
            <person name="Abu-Threideh J."/>
            <person name="Stoneking T."/>
            <person name="Kalicki J."/>
            <person name="Graves T."/>
            <person name="Harmon G."/>
            <person name="Edwards J."/>
            <person name="Latreille P."/>
            <person name="Courtney L."/>
            <person name="Cloud J."/>
            <person name="Abbott A."/>
            <person name="Scott K."/>
            <person name="Johnson D."/>
            <person name="Minx P."/>
            <person name="Bentley D."/>
            <person name="Fulton B."/>
            <person name="Miller N."/>
            <person name="Greco T."/>
            <person name="Kemp K."/>
            <person name="Kramer J."/>
            <person name="Fulton L."/>
            <person name="Mardis E."/>
            <person name="Dante M."/>
            <person name="Pepin K."/>
            <person name="Hillier L.W."/>
            <person name="Nelson J."/>
            <person name="Spieth J."/>
            <person name="Ryan E."/>
            <person name="Andrews S."/>
            <person name="Geisel C."/>
            <person name="Layman D."/>
            <person name="Du H."/>
            <person name="Ali J."/>
            <person name="Berghoff A."/>
            <person name="Jones K."/>
            <person name="Drone K."/>
            <person name="Cotton M."/>
            <person name="Joshu C."/>
            <person name="Antonoiu B."/>
            <person name="Zidanic M."/>
            <person name="Strong C."/>
            <person name="Sun H."/>
            <person name="Lamar B."/>
            <person name="Yordan C."/>
            <person name="Ma P."/>
            <person name="Zhong J."/>
            <person name="Preston R."/>
            <person name="Vil D."/>
            <person name="Shekher M."/>
            <person name="Matero A."/>
            <person name="Shah R."/>
            <person name="Swaby I.K."/>
            <person name="O'Shaughnessy A."/>
            <person name="Rodriguez M."/>
            <person name="Hoffman J."/>
            <person name="Till S."/>
            <person name="Granat S."/>
            <person name="Shohdy N."/>
            <person name="Hasegawa A."/>
            <person name="Hameed A."/>
            <person name="Lodhi M."/>
            <person name="Johnson A."/>
            <person name="Chen E."/>
            <person name="Marra M.A."/>
            <person name="Martienssen R."/>
            <person name="McCombie W.R."/>
        </authorList>
    </citation>
    <scope>NUCLEOTIDE SEQUENCE [LARGE SCALE GENOMIC DNA]</scope>
    <source>
        <strain>cv. Columbia</strain>
    </source>
</reference>
<reference key="2">
    <citation type="journal article" date="2017" name="Plant J.">
        <title>Araport11: a complete reannotation of the Arabidopsis thaliana reference genome.</title>
        <authorList>
            <person name="Cheng C.Y."/>
            <person name="Krishnakumar V."/>
            <person name="Chan A.P."/>
            <person name="Thibaud-Nissen F."/>
            <person name="Schobel S."/>
            <person name="Town C.D."/>
        </authorList>
    </citation>
    <scope>GENOME REANNOTATION</scope>
    <source>
        <strain>cv. Columbia</strain>
    </source>
</reference>
<reference key="3">
    <citation type="journal article" date="2003" name="Science">
        <title>Empirical analysis of transcriptional activity in the Arabidopsis genome.</title>
        <authorList>
            <person name="Yamada K."/>
            <person name="Lim J."/>
            <person name="Dale J.M."/>
            <person name="Chen H."/>
            <person name="Shinn P."/>
            <person name="Palm C.J."/>
            <person name="Southwick A.M."/>
            <person name="Wu H.C."/>
            <person name="Kim C.J."/>
            <person name="Nguyen M."/>
            <person name="Pham P.K."/>
            <person name="Cheuk R.F."/>
            <person name="Karlin-Newmann G."/>
            <person name="Liu S.X."/>
            <person name="Lam B."/>
            <person name="Sakano H."/>
            <person name="Wu T."/>
            <person name="Yu G."/>
            <person name="Miranda M."/>
            <person name="Quach H.L."/>
            <person name="Tripp M."/>
            <person name="Chang C.H."/>
            <person name="Lee J.M."/>
            <person name="Toriumi M.J."/>
            <person name="Chan M.M."/>
            <person name="Tang C.C."/>
            <person name="Onodera C.S."/>
            <person name="Deng J.M."/>
            <person name="Akiyama K."/>
            <person name="Ansari Y."/>
            <person name="Arakawa T."/>
            <person name="Banh J."/>
            <person name="Banno F."/>
            <person name="Bowser L."/>
            <person name="Brooks S.Y."/>
            <person name="Carninci P."/>
            <person name="Chao Q."/>
            <person name="Choy N."/>
            <person name="Enju A."/>
            <person name="Goldsmith A.D."/>
            <person name="Gurjal M."/>
            <person name="Hansen N.F."/>
            <person name="Hayashizaki Y."/>
            <person name="Johnson-Hopson C."/>
            <person name="Hsuan V.W."/>
            <person name="Iida K."/>
            <person name="Karnes M."/>
            <person name="Khan S."/>
            <person name="Koesema E."/>
            <person name="Ishida J."/>
            <person name="Jiang P.X."/>
            <person name="Jones T."/>
            <person name="Kawai J."/>
            <person name="Kamiya A."/>
            <person name="Meyers C."/>
            <person name="Nakajima M."/>
            <person name="Narusaka M."/>
            <person name="Seki M."/>
            <person name="Sakurai T."/>
            <person name="Satou M."/>
            <person name="Tamse R."/>
            <person name="Vaysberg M."/>
            <person name="Wallender E.K."/>
            <person name="Wong C."/>
            <person name="Yamamura Y."/>
            <person name="Yuan S."/>
            <person name="Shinozaki K."/>
            <person name="Davis R.W."/>
            <person name="Theologis A."/>
            <person name="Ecker J.R."/>
        </authorList>
    </citation>
    <scope>NUCLEOTIDE SEQUENCE [LARGE SCALE MRNA]</scope>
    <source>
        <strain>cv. Columbia</strain>
    </source>
</reference>
<reference key="4">
    <citation type="journal article" date="2004" name="Plant Physiol.">
        <title>Arabidopsis FHY3/FAR1 gene family and distinct roles of its members in light control of Arabidopsis development.</title>
        <authorList>
            <person name="Lin R."/>
            <person name="Wang H."/>
        </authorList>
    </citation>
    <scope>TISSUE SPECIFICITY</scope>
    <scope>INDUCTION</scope>
    <scope>SUBCELLULAR LOCATION</scope>
    <scope>GENE FAMILY</scope>
    <scope>NOMENCLATURE</scope>
</reference>
<keyword id="KW-0175">Coiled coil</keyword>
<keyword id="KW-0479">Metal-binding</keyword>
<keyword id="KW-0539">Nucleus</keyword>
<keyword id="KW-1185">Reference proteome</keyword>
<keyword id="KW-0862">Zinc</keyword>
<keyword id="KW-0863">Zinc-finger</keyword>
<protein>
    <recommendedName>
        <fullName>Protein FAR1-RELATED SEQUENCE 5</fullName>
    </recommendedName>
</protein>
<name>FRS5_ARATH</name>